<organism>
    <name type="scientific">Latilactobacillus sakei subsp. sakei (strain 23K)</name>
    <name type="common">Lactobacillus sakei subsp. sakei</name>
    <dbReference type="NCBI Taxonomy" id="314315"/>
    <lineage>
        <taxon>Bacteria</taxon>
        <taxon>Bacillati</taxon>
        <taxon>Bacillota</taxon>
        <taxon>Bacilli</taxon>
        <taxon>Lactobacillales</taxon>
        <taxon>Lactobacillaceae</taxon>
        <taxon>Latilactobacillus</taxon>
    </lineage>
</organism>
<name>RL21_LATSS</name>
<proteinExistence type="inferred from homology"/>
<sequence>MYAIIKTGGKQYKVEAGQAIYVEKLTAEAGEKVTFDQVILVGGETTKVGTPNIDGVTVDGTVEKQGREKKVVTFKYKPKKHSHQKKGHRQPYTKVMIDAINA</sequence>
<protein>
    <recommendedName>
        <fullName evidence="1">Large ribosomal subunit protein bL21</fullName>
    </recommendedName>
    <alternativeName>
        <fullName evidence="2">50S ribosomal protein L21</fullName>
    </alternativeName>
</protein>
<accession>Q38XV5</accession>
<dbReference type="EMBL" id="CR936503">
    <property type="protein sequence ID" value="CAI54974.1"/>
    <property type="molecule type" value="Genomic_DNA"/>
</dbReference>
<dbReference type="RefSeq" id="WP_011374379.1">
    <property type="nucleotide sequence ID" value="NC_007576.1"/>
</dbReference>
<dbReference type="SMR" id="Q38XV5"/>
<dbReference type="STRING" id="314315.LCA_0670"/>
<dbReference type="KEGG" id="lsa:LCA_0670"/>
<dbReference type="eggNOG" id="COG0261">
    <property type="taxonomic scope" value="Bacteria"/>
</dbReference>
<dbReference type="HOGENOM" id="CLU_061463_3_1_9"/>
<dbReference type="OrthoDB" id="9813334at2"/>
<dbReference type="Proteomes" id="UP000002707">
    <property type="component" value="Chromosome"/>
</dbReference>
<dbReference type="GO" id="GO:0005737">
    <property type="term" value="C:cytoplasm"/>
    <property type="evidence" value="ECO:0007669"/>
    <property type="project" value="UniProtKB-ARBA"/>
</dbReference>
<dbReference type="GO" id="GO:1990904">
    <property type="term" value="C:ribonucleoprotein complex"/>
    <property type="evidence" value="ECO:0007669"/>
    <property type="project" value="UniProtKB-KW"/>
</dbReference>
<dbReference type="GO" id="GO:0005840">
    <property type="term" value="C:ribosome"/>
    <property type="evidence" value="ECO:0007669"/>
    <property type="project" value="UniProtKB-KW"/>
</dbReference>
<dbReference type="GO" id="GO:0019843">
    <property type="term" value="F:rRNA binding"/>
    <property type="evidence" value="ECO:0007669"/>
    <property type="project" value="UniProtKB-UniRule"/>
</dbReference>
<dbReference type="GO" id="GO:0003735">
    <property type="term" value="F:structural constituent of ribosome"/>
    <property type="evidence" value="ECO:0007669"/>
    <property type="project" value="InterPro"/>
</dbReference>
<dbReference type="GO" id="GO:0006412">
    <property type="term" value="P:translation"/>
    <property type="evidence" value="ECO:0007669"/>
    <property type="project" value="UniProtKB-UniRule"/>
</dbReference>
<dbReference type="HAMAP" id="MF_01363">
    <property type="entry name" value="Ribosomal_bL21"/>
    <property type="match status" value="1"/>
</dbReference>
<dbReference type="InterPro" id="IPR028909">
    <property type="entry name" value="bL21-like"/>
</dbReference>
<dbReference type="InterPro" id="IPR036164">
    <property type="entry name" value="bL21-like_sf"/>
</dbReference>
<dbReference type="InterPro" id="IPR001787">
    <property type="entry name" value="Ribosomal_bL21"/>
</dbReference>
<dbReference type="InterPro" id="IPR018258">
    <property type="entry name" value="Ribosomal_bL21_CS"/>
</dbReference>
<dbReference type="NCBIfam" id="TIGR00061">
    <property type="entry name" value="L21"/>
    <property type="match status" value="1"/>
</dbReference>
<dbReference type="PANTHER" id="PTHR21349">
    <property type="entry name" value="50S RIBOSOMAL PROTEIN L21"/>
    <property type="match status" value="1"/>
</dbReference>
<dbReference type="PANTHER" id="PTHR21349:SF0">
    <property type="entry name" value="LARGE RIBOSOMAL SUBUNIT PROTEIN BL21M"/>
    <property type="match status" value="1"/>
</dbReference>
<dbReference type="Pfam" id="PF00829">
    <property type="entry name" value="Ribosomal_L21p"/>
    <property type="match status" value="1"/>
</dbReference>
<dbReference type="SUPFAM" id="SSF141091">
    <property type="entry name" value="L21p-like"/>
    <property type="match status" value="1"/>
</dbReference>
<dbReference type="PROSITE" id="PS01169">
    <property type="entry name" value="RIBOSOMAL_L21"/>
    <property type="match status" value="1"/>
</dbReference>
<keyword id="KW-1185">Reference proteome</keyword>
<keyword id="KW-0687">Ribonucleoprotein</keyword>
<keyword id="KW-0689">Ribosomal protein</keyword>
<keyword id="KW-0694">RNA-binding</keyword>
<keyword id="KW-0699">rRNA-binding</keyword>
<feature type="chain" id="PRO_0000269331" description="Large ribosomal subunit protein bL21">
    <location>
        <begin position="1"/>
        <end position="102"/>
    </location>
</feature>
<comment type="function">
    <text evidence="1">This protein binds to 23S rRNA in the presence of protein L20.</text>
</comment>
<comment type="subunit">
    <text evidence="1">Part of the 50S ribosomal subunit. Contacts protein L20.</text>
</comment>
<comment type="similarity">
    <text evidence="1">Belongs to the bacterial ribosomal protein bL21 family.</text>
</comment>
<gene>
    <name evidence="1" type="primary">rplU</name>
    <name type="ordered locus">LCA_0670</name>
</gene>
<evidence type="ECO:0000255" key="1">
    <source>
        <dbReference type="HAMAP-Rule" id="MF_01363"/>
    </source>
</evidence>
<evidence type="ECO:0000305" key="2"/>
<reference key="1">
    <citation type="journal article" date="2005" name="Nat. Biotechnol.">
        <title>The complete genome sequence of the meat-borne lactic acid bacterium Lactobacillus sakei 23K.</title>
        <authorList>
            <person name="Chaillou S."/>
            <person name="Champomier-Verges M.-C."/>
            <person name="Cornet M."/>
            <person name="Crutz-Le Coq A.-M."/>
            <person name="Dudez A.-M."/>
            <person name="Martin V."/>
            <person name="Beaufils S."/>
            <person name="Darbon-Rongere E."/>
            <person name="Bossy R."/>
            <person name="Loux V."/>
            <person name="Zagorec M."/>
        </authorList>
    </citation>
    <scope>NUCLEOTIDE SEQUENCE [LARGE SCALE GENOMIC DNA]</scope>
    <source>
        <strain>23K</strain>
    </source>
</reference>